<evidence type="ECO:0000250" key="1"/>
<evidence type="ECO:0000255" key="2"/>
<evidence type="ECO:0000305" key="3"/>
<feature type="chain" id="PRO_0000299400" description="Nurim">
    <location>
        <begin position="1"/>
        <end position="262"/>
    </location>
</feature>
<feature type="topological domain" description="Nuclear" evidence="2">
    <location>
        <begin position="1"/>
        <end position="4"/>
    </location>
</feature>
<feature type="transmembrane region" description="Helical" evidence="2">
    <location>
        <begin position="5"/>
        <end position="28"/>
    </location>
</feature>
<feature type="topological domain" description="Perinuclear space" evidence="2">
    <location>
        <begin position="29"/>
        <end position="58"/>
    </location>
</feature>
<feature type="transmembrane region" description="Helical" evidence="2">
    <location>
        <begin position="59"/>
        <end position="80"/>
    </location>
</feature>
<feature type="topological domain" description="Nuclear" evidence="2">
    <location>
        <begin position="81"/>
        <end position="97"/>
    </location>
</feature>
<feature type="transmembrane region" description="Helical" evidence="2">
    <location>
        <begin position="98"/>
        <end position="114"/>
    </location>
</feature>
<feature type="topological domain" description="Perinuclear space" evidence="2">
    <location>
        <begin position="115"/>
        <end position="133"/>
    </location>
</feature>
<feature type="transmembrane region" description="Helical" evidence="2">
    <location>
        <begin position="134"/>
        <end position="164"/>
    </location>
</feature>
<feature type="topological domain" description="Nuclear" evidence="2">
    <location>
        <begin position="165"/>
        <end position="191"/>
    </location>
</feature>
<feature type="transmembrane region" description="Helical" evidence="2">
    <location>
        <begin position="192"/>
        <end position="210"/>
    </location>
</feature>
<feature type="topological domain" description="Perinuclear space" evidence="2">
    <location>
        <begin position="211"/>
        <end position="216"/>
    </location>
</feature>
<feature type="transmembrane region" description="Helical" evidence="2">
    <location>
        <begin position="217"/>
        <end position="234"/>
    </location>
</feature>
<feature type="topological domain" description="Nuclear" evidence="2">
    <location>
        <begin position="235"/>
        <end position="262"/>
    </location>
</feature>
<keyword id="KW-0472">Membrane</keyword>
<keyword id="KW-0539">Nucleus</keyword>
<keyword id="KW-1185">Reference proteome</keyword>
<keyword id="KW-0812">Transmembrane</keyword>
<keyword id="KW-1133">Transmembrane helix</keyword>
<gene>
    <name type="primary">Nrm</name>
</gene>
<dbReference type="EMBL" id="BX883048">
    <property type="protein sequence ID" value="CAE84033.1"/>
    <property type="molecule type" value="Genomic_DNA"/>
</dbReference>
<dbReference type="RefSeq" id="NP_997673.1">
    <property type="nucleotide sequence ID" value="NM_212508.2"/>
</dbReference>
<dbReference type="BioGRID" id="262960">
    <property type="interactions" value="1"/>
</dbReference>
<dbReference type="FunCoup" id="Q6MG14">
    <property type="interactions" value="551"/>
</dbReference>
<dbReference type="STRING" id="10116.ENSRNOP00000001085"/>
<dbReference type="PhosphoSitePlus" id="Q6MG14"/>
<dbReference type="PaxDb" id="10116-ENSRNOP00000001085"/>
<dbReference type="Ensembl" id="ENSRNOT00000001085.6">
    <property type="protein sequence ID" value="ENSRNOP00000001085.3"/>
    <property type="gene ID" value="ENSRNOG00000000818.6"/>
</dbReference>
<dbReference type="GeneID" id="361791"/>
<dbReference type="KEGG" id="rno:361791"/>
<dbReference type="UCSC" id="RGD:1302966">
    <property type="organism name" value="rat"/>
</dbReference>
<dbReference type="AGR" id="RGD:1302966"/>
<dbReference type="CTD" id="11270"/>
<dbReference type="RGD" id="1302966">
    <property type="gene designation" value="Nrm"/>
</dbReference>
<dbReference type="eggNOG" id="ENOG502RS62">
    <property type="taxonomic scope" value="Eukaryota"/>
</dbReference>
<dbReference type="GeneTree" id="ENSGT00530000064035"/>
<dbReference type="HOGENOM" id="CLU_083708_1_0_1"/>
<dbReference type="InParanoid" id="Q6MG14"/>
<dbReference type="OrthoDB" id="74915at9989"/>
<dbReference type="PhylomeDB" id="Q6MG14"/>
<dbReference type="TreeFam" id="TF324853"/>
<dbReference type="PRO" id="PR:Q6MG14"/>
<dbReference type="Proteomes" id="UP000002494">
    <property type="component" value="Chromosome 20"/>
</dbReference>
<dbReference type="Bgee" id="ENSRNOG00000000818">
    <property type="expression patterns" value="Expressed in testis and 19 other cell types or tissues"/>
</dbReference>
<dbReference type="ExpressionAtlas" id="Q6MG14">
    <property type="expression patterns" value="baseline and differential"/>
</dbReference>
<dbReference type="GO" id="GO:0005635">
    <property type="term" value="C:nuclear envelope"/>
    <property type="evidence" value="ECO:0000250"/>
    <property type="project" value="UniProtKB"/>
</dbReference>
<dbReference type="GO" id="GO:0005637">
    <property type="term" value="C:nuclear inner membrane"/>
    <property type="evidence" value="ECO:0007669"/>
    <property type="project" value="UniProtKB-SubCell"/>
</dbReference>
<dbReference type="GO" id="GO:0031965">
    <property type="term" value="C:nuclear membrane"/>
    <property type="evidence" value="ECO:0000318"/>
    <property type="project" value="GO_Central"/>
</dbReference>
<dbReference type="InterPro" id="IPR033580">
    <property type="entry name" value="Nurim-like"/>
</dbReference>
<dbReference type="PANTHER" id="PTHR31040">
    <property type="entry name" value="NURIM"/>
    <property type="match status" value="1"/>
</dbReference>
<dbReference type="PANTHER" id="PTHR31040:SF1">
    <property type="entry name" value="NURIM"/>
    <property type="match status" value="1"/>
</dbReference>
<proteinExistence type="inferred from homology"/>
<protein>
    <recommendedName>
        <fullName>Nurim</fullName>
    </recommendedName>
    <alternativeName>
        <fullName>Nuclear envelope membrane protein</fullName>
    </alternativeName>
    <alternativeName>
        <fullName>Nuclear rim protein</fullName>
    </alternativeName>
</protein>
<accession>Q6MG14</accession>
<name>NRM_RAT</name>
<organism>
    <name type="scientific">Rattus norvegicus</name>
    <name type="common">Rat</name>
    <dbReference type="NCBI Taxonomy" id="10116"/>
    <lineage>
        <taxon>Eukaryota</taxon>
        <taxon>Metazoa</taxon>
        <taxon>Chordata</taxon>
        <taxon>Craniata</taxon>
        <taxon>Vertebrata</taxon>
        <taxon>Euteleostomi</taxon>
        <taxon>Mammalia</taxon>
        <taxon>Eutheria</taxon>
        <taxon>Euarchontoglires</taxon>
        <taxon>Glires</taxon>
        <taxon>Rodentia</taxon>
        <taxon>Myomorpha</taxon>
        <taxon>Muroidea</taxon>
        <taxon>Muridae</taxon>
        <taxon>Murinae</taxon>
        <taxon>Rattus</taxon>
    </lineage>
</organism>
<sequence>MAPALLLVPAALASFVLAFGTGVEFVRFTSLRPLLGGIPESGGPDARHGWLAALQDRSILASLAWDLCLLLLFVVQHSLMATEAVKAWTSRYFGVLQRSLYVACTALALQLVMRYWEATPRGPVLWEARAEPWATWVPLLCFVLHVVSWLLIFSILLVFDYAELMGLKQVYYHVLGLGEPLSLKSPRALRLFSHLRHPVCVELLTVLWVVPTLGTDRLLLALLFTLYLGLAHGLDQQDLRYLRSQLQRKLQLLSRPQDGEAE</sequence>
<reference key="1">
    <citation type="journal article" date="2004" name="Genome Res.">
        <title>The genomic sequence and comparative analysis of the rat major histocompatibility complex.</title>
        <authorList>
            <person name="Hurt P."/>
            <person name="Walter L."/>
            <person name="Sudbrak R."/>
            <person name="Klages S."/>
            <person name="Mueller I."/>
            <person name="Shiina T."/>
            <person name="Inoko H."/>
            <person name="Lehrach H."/>
            <person name="Guenther E."/>
            <person name="Reinhardt R."/>
            <person name="Himmelbauer H."/>
        </authorList>
    </citation>
    <scope>NUCLEOTIDE SEQUENCE [LARGE SCALE GENOMIC DNA]</scope>
    <source>
        <strain>Brown Norway</strain>
    </source>
</reference>
<comment type="subcellular location">
    <subcellularLocation>
        <location evidence="1">Nucleus inner membrane</location>
        <topology evidence="1">Multi-pass membrane protein</topology>
    </subcellularLocation>
</comment>
<comment type="similarity">
    <text evidence="3">Belongs to the nurim family.</text>
</comment>